<sequence>MLFLISPAKSLDYEHPAPVPDAGVPHFSAAAGELIGLLRQHDERGIAELMDLSEPLAALNVARYAAFSPRPTSANSKPALFAFDGDVYGGLGAHELSRPQVRWVQEHVAILSGLYGVLRPLDRLQPYRLEMGTRLANPLGKDLYAFWRTRIAEHLNERLAGQRAPVVVNLASEEYFKAVDRSELRARVVHCVFQDWKGGAYKIISFHAKRARGLMVRYAALHRARSPRALAGFDLEGYAFDASASEPDRMVFRRRLP</sequence>
<protein>
    <recommendedName>
        <fullName evidence="1">UPF0246 protein Mpe_A2092</fullName>
    </recommendedName>
</protein>
<organism>
    <name type="scientific">Methylibium petroleiphilum (strain ATCC BAA-1232 / LMG 22953 / PM1)</name>
    <dbReference type="NCBI Taxonomy" id="420662"/>
    <lineage>
        <taxon>Bacteria</taxon>
        <taxon>Pseudomonadati</taxon>
        <taxon>Pseudomonadota</taxon>
        <taxon>Betaproteobacteria</taxon>
        <taxon>Burkholderiales</taxon>
        <taxon>Sphaerotilaceae</taxon>
        <taxon>Methylibium</taxon>
    </lineage>
</organism>
<reference key="1">
    <citation type="journal article" date="2007" name="J. Bacteriol.">
        <title>Whole-genome analysis of the methyl tert-butyl ether-degrading beta-proteobacterium Methylibium petroleiphilum PM1.</title>
        <authorList>
            <person name="Kane S.R."/>
            <person name="Chakicherla A.Y."/>
            <person name="Chain P.S.G."/>
            <person name="Schmidt R."/>
            <person name="Shin M.W."/>
            <person name="Legler T.C."/>
            <person name="Scow K.M."/>
            <person name="Larimer F.W."/>
            <person name="Lucas S.M."/>
            <person name="Richardson P.M."/>
            <person name="Hristova K.R."/>
        </authorList>
    </citation>
    <scope>NUCLEOTIDE SEQUENCE [LARGE SCALE GENOMIC DNA]</scope>
    <source>
        <strain>ATCC BAA-1232 / LMG 22953 / PM1</strain>
    </source>
</reference>
<accession>A2SHK9</accession>
<gene>
    <name type="ordered locus">Mpe_A2092</name>
</gene>
<evidence type="ECO:0000255" key="1">
    <source>
        <dbReference type="HAMAP-Rule" id="MF_00652"/>
    </source>
</evidence>
<comment type="similarity">
    <text evidence="1">Belongs to the UPF0246 family.</text>
</comment>
<keyword id="KW-1185">Reference proteome</keyword>
<dbReference type="EMBL" id="CP000555">
    <property type="protein sequence ID" value="ABM95048.1"/>
    <property type="molecule type" value="Genomic_DNA"/>
</dbReference>
<dbReference type="RefSeq" id="WP_011829685.1">
    <property type="nucleotide sequence ID" value="NC_008825.1"/>
</dbReference>
<dbReference type="SMR" id="A2SHK9"/>
<dbReference type="STRING" id="420662.Mpe_A2092"/>
<dbReference type="KEGG" id="mpt:Mpe_A2092"/>
<dbReference type="eggNOG" id="COG3022">
    <property type="taxonomic scope" value="Bacteria"/>
</dbReference>
<dbReference type="HOGENOM" id="CLU_061989_0_0_4"/>
<dbReference type="Proteomes" id="UP000000366">
    <property type="component" value="Chromosome"/>
</dbReference>
<dbReference type="GO" id="GO:0005829">
    <property type="term" value="C:cytosol"/>
    <property type="evidence" value="ECO:0007669"/>
    <property type="project" value="TreeGrafter"/>
</dbReference>
<dbReference type="GO" id="GO:0033194">
    <property type="term" value="P:response to hydroperoxide"/>
    <property type="evidence" value="ECO:0007669"/>
    <property type="project" value="TreeGrafter"/>
</dbReference>
<dbReference type="HAMAP" id="MF_00652">
    <property type="entry name" value="UPF0246"/>
    <property type="match status" value="1"/>
</dbReference>
<dbReference type="InterPro" id="IPR005583">
    <property type="entry name" value="YaaA"/>
</dbReference>
<dbReference type="NCBIfam" id="NF002542">
    <property type="entry name" value="PRK02101.1-3"/>
    <property type="match status" value="1"/>
</dbReference>
<dbReference type="PANTHER" id="PTHR30283:SF4">
    <property type="entry name" value="PEROXIDE STRESS RESISTANCE PROTEIN YAAA"/>
    <property type="match status" value="1"/>
</dbReference>
<dbReference type="PANTHER" id="PTHR30283">
    <property type="entry name" value="PEROXIDE STRESS RESPONSE PROTEIN YAAA"/>
    <property type="match status" value="1"/>
</dbReference>
<dbReference type="Pfam" id="PF03883">
    <property type="entry name" value="H2O2_YaaD"/>
    <property type="match status" value="1"/>
</dbReference>
<feature type="chain" id="PRO_1000061616" description="UPF0246 protein Mpe_A2092">
    <location>
        <begin position="1"/>
        <end position="257"/>
    </location>
</feature>
<name>Y2092_METPP</name>
<proteinExistence type="inferred from homology"/>